<sequence length="392" mass="41953">MSKHIVILGAGYGGVLSALTVRKHYTKEQARVTVVNKYPTHQIITELHRLAAGNVSEKAVAMPLEKLFKGKDIDLKIAEVSSFSVDKKEVALADGSTLTYDALVVGLGSVTAYFGIPGLEENSMVLKSAADANKVFQHVEDRVREYSKTKNEADATILIGGGGLTGVELVGELADIMPNLAKKYGVDHKEIKLKLVEAGPKILPVLPDDLIERATASLEKRGVEFLTGLPVTNVEGNVIDLKDGSKVVANTFVWTGGVQGNPLVGESGLEVNRGRATVNDFLQSTSHEDVFVAGDSAVYFGPDGRPYPPTAQIAWQMGELIGYNLFAYLEGKTLETFKPVNSGTLASLGRKDAVAIIGANSTPLKGLPASLMKEASNVRYLTHIKGLFSLAY</sequence>
<comment type="cofactor">
    <cofactor evidence="1">
        <name>FAD</name>
        <dbReference type="ChEBI" id="CHEBI:57692"/>
    </cofactor>
</comment>
<comment type="induction">
    <text>By glucose starvation.</text>
</comment>
<comment type="similarity">
    <text evidence="3">Belongs to the NADH dehydrogenase family.</text>
</comment>
<organism>
    <name type="scientific">Bacillus subtilis (strain 168)</name>
    <dbReference type="NCBI Taxonomy" id="224308"/>
    <lineage>
        <taxon>Bacteria</taxon>
        <taxon>Bacillati</taxon>
        <taxon>Bacillota</taxon>
        <taxon>Bacilli</taxon>
        <taxon>Bacillales</taxon>
        <taxon>Bacillaceae</taxon>
        <taxon>Bacillus</taxon>
    </lineage>
</organism>
<proteinExistence type="evidence at protein level"/>
<feature type="initiator methionine" description="Removed" evidence="2">
    <location>
        <position position="1"/>
    </location>
</feature>
<feature type="chain" id="PRO_0000049599" description="NADH dehydrogenase-like protein YjlD">
    <location>
        <begin position="2"/>
        <end position="392"/>
    </location>
</feature>
<protein>
    <recommendedName>
        <fullName>NADH dehydrogenase-like protein YjlD</fullName>
        <ecNumber>1.6.99.-</ecNumber>
    </recommendedName>
    <alternativeName>
        <fullName>Glucose starvation-inducible protein 5</fullName>
        <shortName>GSI5</shortName>
    </alternativeName>
</protein>
<dbReference type="EC" id="1.6.99.-"/>
<dbReference type="EMBL" id="AF015825">
    <property type="protein sequence ID" value="AAC46325.1"/>
    <property type="molecule type" value="Genomic_DNA"/>
</dbReference>
<dbReference type="EMBL" id="AL009126">
    <property type="protein sequence ID" value="CAB13086.1"/>
    <property type="molecule type" value="Genomic_DNA"/>
</dbReference>
<dbReference type="PIR" id="B69852">
    <property type="entry name" value="B69852"/>
</dbReference>
<dbReference type="RefSeq" id="WP_003232765.1">
    <property type="nucleotide sequence ID" value="NZ_OZ025638.1"/>
</dbReference>
<dbReference type="SMR" id="P80861"/>
<dbReference type="FunCoup" id="P80861">
    <property type="interactions" value="326"/>
</dbReference>
<dbReference type="STRING" id="224308.BSU12290"/>
<dbReference type="jPOST" id="P80861"/>
<dbReference type="PaxDb" id="224308-BSU12290"/>
<dbReference type="DNASU" id="939832"/>
<dbReference type="EnsemblBacteria" id="CAB13086">
    <property type="protein sequence ID" value="CAB13086"/>
    <property type="gene ID" value="BSU_12290"/>
</dbReference>
<dbReference type="GeneID" id="939832"/>
<dbReference type="KEGG" id="bsu:BSU12290"/>
<dbReference type="PATRIC" id="fig|224308.179.peg.1329"/>
<dbReference type="eggNOG" id="COG1252">
    <property type="taxonomic scope" value="Bacteria"/>
</dbReference>
<dbReference type="InParanoid" id="P80861"/>
<dbReference type="OrthoDB" id="9781621at2"/>
<dbReference type="PhylomeDB" id="P80861"/>
<dbReference type="BioCyc" id="BSUB:BSU12290-MONOMER"/>
<dbReference type="BioCyc" id="MetaCyc:BSU12290-MONOMER"/>
<dbReference type="Proteomes" id="UP000001570">
    <property type="component" value="Chromosome"/>
</dbReference>
<dbReference type="GO" id="GO:0016491">
    <property type="term" value="F:oxidoreductase activity"/>
    <property type="evidence" value="ECO:0000318"/>
    <property type="project" value="GO_Central"/>
</dbReference>
<dbReference type="Gene3D" id="3.50.50.100">
    <property type="match status" value="1"/>
</dbReference>
<dbReference type="InterPro" id="IPR036188">
    <property type="entry name" value="FAD/NAD-bd_sf"/>
</dbReference>
<dbReference type="InterPro" id="IPR023753">
    <property type="entry name" value="FAD/NAD-binding_dom"/>
</dbReference>
<dbReference type="InterPro" id="IPR051169">
    <property type="entry name" value="NADH-Q_oxidoreductase"/>
</dbReference>
<dbReference type="PANTHER" id="PTHR42913:SF3">
    <property type="entry name" value="64 KDA MITOCHONDRIAL NADH DEHYDROGENASE (EUROFUNG)"/>
    <property type="match status" value="1"/>
</dbReference>
<dbReference type="PANTHER" id="PTHR42913">
    <property type="entry name" value="APOPTOSIS-INDUCING FACTOR 1"/>
    <property type="match status" value="1"/>
</dbReference>
<dbReference type="Pfam" id="PF07992">
    <property type="entry name" value="Pyr_redox_2"/>
    <property type="match status" value="1"/>
</dbReference>
<dbReference type="PRINTS" id="PR00368">
    <property type="entry name" value="FADPNR"/>
</dbReference>
<dbReference type="PRINTS" id="PR00411">
    <property type="entry name" value="PNDRDTASEI"/>
</dbReference>
<dbReference type="SUPFAM" id="SSF51905">
    <property type="entry name" value="FAD/NAD(P)-binding domain"/>
    <property type="match status" value="1"/>
</dbReference>
<accession>P80861</accession>
<accession>Q9R442</accession>
<reference key="1">
    <citation type="journal article" date="1998" name="Microbiology">
        <title>A 35.7 kb DNA fragment from the Bacillus subtilis chromosome containing a putative 12.3 kb operon involved in hexuronate catabolism and a perfectly symmetrical hypothetical catabolite-responsive element.</title>
        <authorList>
            <person name="Rivolta C."/>
            <person name="Soldo B."/>
            <person name="Lazarevic V."/>
            <person name="Joris B."/>
            <person name="Mauel C."/>
            <person name="Karamata D."/>
        </authorList>
    </citation>
    <scope>NUCLEOTIDE SEQUENCE [GENOMIC DNA]</scope>
    <source>
        <strain>168</strain>
    </source>
</reference>
<reference key="2">
    <citation type="journal article" date="1997" name="Nature">
        <title>The complete genome sequence of the Gram-positive bacterium Bacillus subtilis.</title>
        <authorList>
            <person name="Kunst F."/>
            <person name="Ogasawara N."/>
            <person name="Moszer I."/>
            <person name="Albertini A.M."/>
            <person name="Alloni G."/>
            <person name="Azevedo V."/>
            <person name="Bertero M.G."/>
            <person name="Bessieres P."/>
            <person name="Bolotin A."/>
            <person name="Borchert S."/>
            <person name="Borriss R."/>
            <person name="Boursier L."/>
            <person name="Brans A."/>
            <person name="Braun M."/>
            <person name="Brignell S.C."/>
            <person name="Bron S."/>
            <person name="Brouillet S."/>
            <person name="Bruschi C.V."/>
            <person name="Caldwell B."/>
            <person name="Capuano V."/>
            <person name="Carter N.M."/>
            <person name="Choi S.-K."/>
            <person name="Codani J.-J."/>
            <person name="Connerton I.F."/>
            <person name="Cummings N.J."/>
            <person name="Daniel R.A."/>
            <person name="Denizot F."/>
            <person name="Devine K.M."/>
            <person name="Duesterhoeft A."/>
            <person name="Ehrlich S.D."/>
            <person name="Emmerson P.T."/>
            <person name="Entian K.-D."/>
            <person name="Errington J."/>
            <person name="Fabret C."/>
            <person name="Ferrari E."/>
            <person name="Foulger D."/>
            <person name="Fritz C."/>
            <person name="Fujita M."/>
            <person name="Fujita Y."/>
            <person name="Fuma S."/>
            <person name="Galizzi A."/>
            <person name="Galleron N."/>
            <person name="Ghim S.-Y."/>
            <person name="Glaser P."/>
            <person name="Goffeau A."/>
            <person name="Golightly E.J."/>
            <person name="Grandi G."/>
            <person name="Guiseppi G."/>
            <person name="Guy B.J."/>
            <person name="Haga K."/>
            <person name="Haiech J."/>
            <person name="Harwood C.R."/>
            <person name="Henaut A."/>
            <person name="Hilbert H."/>
            <person name="Holsappel S."/>
            <person name="Hosono S."/>
            <person name="Hullo M.-F."/>
            <person name="Itaya M."/>
            <person name="Jones L.-M."/>
            <person name="Joris B."/>
            <person name="Karamata D."/>
            <person name="Kasahara Y."/>
            <person name="Klaerr-Blanchard M."/>
            <person name="Klein C."/>
            <person name="Kobayashi Y."/>
            <person name="Koetter P."/>
            <person name="Koningstein G."/>
            <person name="Krogh S."/>
            <person name="Kumano M."/>
            <person name="Kurita K."/>
            <person name="Lapidus A."/>
            <person name="Lardinois S."/>
            <person name="Lauber J."/>
            <person name="Lazarevic V."/>
            <person name="Lee S.-M."/>
            <person name="Levine A."/>
            <person name="Liu H."/>
            <person name="Masuda S."/>
            <person name="Mauel C."/>
            <person name="Medigue C."/>
            <person name="Medina N."/>
            <person name="Mellado R.P."/>
            <person name="Mizuno M."/>
            <person name="Moestl D."/>
            <person name="Nakai S."/>
            <person name="Noback M."/>
            <person name="Noone D."/>
            <person name="O'Reilly M."/>
            <person name="Ogawa K."/>
            <person name="Ogiwara A."/>
            <person name="Oudega B."/>
            <person name="Park S.-H."/>
            <person name="Parro V."/>
            <person name="Pohl T.M."/>
            <person name="Portetelle D."/>
            <person name="Porwollik S."/>
            <person name="Prescott A.M."/>
            <person name="Presecan E."/>
            <person name="Pujic P."/>
            <person name="Purnelle B."/>
            <person name="Rapoport G."/>
            <person name="Rey M."/>
            <person name="Reynolds S."/>
            <person name="Rieger M."/>
            <person name="Rivolta C."/>
            <person name="Rocha E."/>
            <person name="Roche B."/>
            <person name="Rose M."/>
            <person name="Sadaie Y."/>
            <person name="Sato T."/>
            <person name="Scanlan E."/>
            <person name="Schleich S."/>
            <person name="Schroeter R."/>
            <person name="Scoffone F."/>
            <person name="Sekiguchi J."/>
            <person name="Sekowska A."/>
            <person name="Seror S.J."/>
            <person name="Serror P."/>
            <person name="Shin B.-S."/>
            <person name="Soldo B."/>
            <person name="Sorokin A."/>
            <person name="Tacconi E."/>
            <person name="Takagi T."/>
            <person name="Takahashi H."/>
            <person name="Takemaru K."/>
            <person name="Takeuchi M."/>
            <person name="Tamakoshi A."/>
            <person name="Tanaka T."/>
            <person name="Terpstra P."/>
            <person name="Tognoni A."/>
            <person name="Tosato V."/>
            <person name="Uchiyama S."/>
            <person name="Vandenbol M."/>
            <person name="Vannier F."/>
            <person name="Vassarotti A."/>
            <person name="Viari A."/>
            <person name="Wambutt R."/>
            <person name="Wedler E."/>
            <person name="Wedler H."/>
            <person name="Weitzenegger T."/>
            <person name="Winters P."/>
            <person name="Wipat A."/>
            <person name="Yamamoto H."/>
            <person name="Yamane K."/>
            <person name="Yasumoto K."/>
            <person name="Yata K."/>
            <person name="Yoshida K."/>
            <person name="Yoshikawa H.-F."/>
            <person name="Zumstein E."/>
            <person name="Yoshikawa H."/>
            <person name="Danchin A."/>
        </authorList>
    </citation>
    <scope>NUCLEOTIDE SEQUENCE [LARGE SCALE GENOMIC DNA]</scope>
    <source>
        <strain>168</strain>
    </source>
</reference>
<reference key="3">
    <citation type="journal article" date="1997" name="Electrophoresis">
        <title>First steps from a two-dimensional protein index towards a response-regulation map for Bacillus subtilis.</title>
        <authorList>
            <person name="Antelmann H."/>
            <person name="Bernhardt J."/>
            <person name="Schmid R."/>
            <person name="Mach H."/>
            <person name="Voelker U."/>
            <person name="Hecker M."/>
        </authorList>
    </citation>
    <scope>PROTEIN SEQUENCE OF 2-11</scope>
    <source>
        <strain>168 / IS58</strain>
    </source>
</reference>
<evidence type="ECO:0000250" key="1"/>
<evidence type="ECO:0000269" key="2">
    <source>
    </source>
</evidence>
<evidence type="ECO:0000305" key="3"/>
<gene>
    <name type="primary">yjlD</name>
    <name type="ordered locus">BSU12290</name>
</gene>
<name>YJLD_BACSU</name>
<keyword id="KW-0903">Direct protein sequencing</keyword>
<keyword id="KW-0274">FAD</keyword>
<keyword id="KW-0285">Flavoprotein</keyword>
<keyword id="KW-0560">Oxidoreductase</keyword>
<keyword id="KW-1185">Reference proteome</keyword>